<accession>B0V9P6</accession>
<proteinExistence type="inferred from homology"/>
<reference key="1">
    <citation type="journal article" date="2008" name="PLoS ONE">
        <title>Comparative analysis of Acinetobacters: three genomes for three lifestyles.</title>
        <authorList>
            <person name="Vallenet D."/>
            <person name="Nordmann P."/>
            <person name="Barbe V."/>
            <person name="Poirel L."/>
            <person name="Mangenot S."/>
            <person name="Bataille E."/>
            <person name="Dossat C."/>
            <person name="Gas S."/>
            <person name="Kreimeyer A."/>
            <person name="Lenoble P."/>
            <person name="Oztas S."/>
            <person name="Poulain J."/>
            <person name="Segurens B."/>
            <person name="Robert C."/>
            <person name="Abergel C."/>
            <person name="Claverie J.-M."/>
            <person name="Raoult D."/>
            <person name="Medigue C."/>
            <person name="Weissenbach J."/>
            <person name="Cruveiller S."/>
        </authorList>
    </citation>
    <scope>NUCLEOTIDE SEQUENCE [LARGE SCALE GENOMIC DNA]</scope>
    <source>
        <strain>AYE</strain>
    </source>
</reference>
<gene>
    <name evidence="1" type="primary">ureB</name>
    <name type="ordered locus">ABAYE2777</name>
</gene>
<sequence>MIPGEVITPETDIELNVGRETLKVVVANLGDRPIQVGSHFHFYEANDALQFDREAVKGFRLNIAAGTAIRFEPGQSREVEIVALAGKREVYGFAGRVMGKLD</sequence>
<name>URE2_ACIBY</name>
<keyword id="KW-0963">Cytoplasm</keyword>
<keyword id="KW-0378">Hydrolase</keyword>
<evidence type="ECO:0000255" key="1">
    <source>
        <dbReference type="HAMAP-Rule" id="MF_01954"/>
    </source>
</evidence>
<protein>
    <recommendedName>
        <fullName evidence="1">Urease subunit beta</fullName>
        <ecNumber evidence="1">3.5.1.5</ecNumber>
    </recommendedName>
    <alternativeName>
        <fullName evidence="1">Urea amidohydrolase subunit beta</fullName>
    </alternativeName>
</protein>
<comment type="catalytic activity">
    <reaction evidence="1">
        <text>urea + 2 H2O + H(+) = hydrogencarbonate + 2 NH4(+)</text>
        <dbReference type="Rhea" id="RHEA:20557"/>
        <dbReference type="ChEBI" id="CHEBI:15377"/>
        <dbReference type="ChEBI" id="CHEBI:15378"/>
        <dbReference type="ChEBI" id="CHEBI:16199"/>
        <dbReference type="ChEBI" id="CHEBI:17544"/>
        <dbReference type="ChEBI" id="CHEBI:28938"/>
        <dbReference type="EC" id="3.5.1.5"/>
    </reaction>
</comment>
<comment type="pathway">
    <text evidence="1">Nitrogen metabolism; urea degradation; CO(2) and NH(3) from urea (urease route): step 1/1.</text>
</comment>
<comment type="subunit">
    <text evidence="1">Heterotrimer of UreA (gamma), UreB (beta) and UreC (alpha) subunits. Three heterotrimers associate to form the active enzyme.</text>
</comment>
<comment type="subcellular location">
    <subcellularLocation>
        <location evidence="1">Cytoplasm</location>
    </subcellularLocation>
</comment>
<comment type="similarity">
    <text evidence="1">Belongs to the urease beta subunit family.</text>
</comment>
<feature type="chain" id="PRO_1000188906" description="Urease subunit beta">
    <location>
        <begin position="1"/>
        <end position="102"/>
    </location>
</feature>
<dbReference type="EC" id="3.5.1.5" evidence="1"/>
<dbReference type="EMBL" id="CU459141">
    <property type="protein sequence ID" value="CAM87608.1"/>
    <property type="molecule type" value="Genomic_DNA"/>
</dbReference>
<dbReference type="RefSeq" id="WP_000612141.1">
    <property type="nucleotide sequence ID" value="NZ_JBDGFB010000015.1"/>
</dbReference>
<dbReference type="SMR" id="B0V9P6"/>
<dbReference type="EnsemblBacteria" id="CAM87608">
    <property type="protein sequence ID" value="CAM87608"/>
    <property type="gene ID" value="ABAYE2777"/>
</dbReference>
<dbReference type="KEGG" id="aby:ABAYE2777"/>
<dbReference type="HOGENOM" id="CLU_129707_1_1_6"/>
<dbReference type="UniPathway" id="UPA00258">
    <property type="reaction ID" value="UER00370"/>
</dbReference>
<dbReference type="GO" id="GO:0035550">
    <property type="term" value="C:urease complex"/>
    <property type="evidence" value="ECO:0007669"/>
    <property type="project" value="InterPro"/>
</dbReference>
<dbReference type="GO" id="GO:0009039">
    <property type="term" value="F:urease activity"/>
    <property type="evidence" value="ECO:0007669"/>
    <property type="project" value="UniProtKB-UniRule"/>
</dbReference>
<dbReference type="GO" id="GO:0043419">
    <property type="term" value="P:urea catabolic process"/>
    <property type="evidence" value="ECO:0007669"/>
    <property type="project" value="UniProtKB-UniRule"/>
</dbReference>
<dbReference type="CDD" id="cd00407">
    <property type="entry name" value="Urease_beta"/>
    <property type="match status" value="1"/>
</dbReference>
<dbReference type="FunFam" id="2.10.150.10:FF:000001">
    <property type="entry name" value="Urease subunit beta"/>
    <property type="match status" value="1"/>
</dbReference>
<dbReference type="Gene3D" id="2.10.150.10">
    <property type="entry name" value="Urease, beta subunit"/>
    <property type="match status" value="1"/>
</dbReference>
<dbReference type="HAMAP" id="MF_01954">
    <property type="entry name" value="Urease_beta"/>
    <property type="match status" value="1"/>
</dbReference>
<dbReference type="InterPro" id="IPR002019">
    <property type="entry name" value="Urease_beta-like"/>
</dbReference>
<dbReference type="InterPro" id="IPR036461">
    <property type="entry name" value="Urease_betasu_sf"/>
</dbReference>
<dbReference type="InterPro" id="IPR050069">
    <property type="entry name" value="Urease_subunit"/>
</dbReference>
<dbReference type="NCBIfam" id="NF009682">
    <property type="entry name" value="PRK13203.1"/>
    <property type="match status" value="1"/>
</dbReference>
<dbReference type="NCBIfam" id="TIGR00192">
    <property type="entry name" value="urease_beta"/>
    <property type="match status" value="1"/>
</dbReference>
<dbReference type="PANTHER" id="PTHR33569">
    <property type="entry name" value="UREASE"/>
    <property type="match status" value="1"/>
</dbReference>
<dbReference type="PANTHER" id="PTHR33569:SF1">
    <property type="entry name" value="UREASE"/>
    <property type="match status" value="1"/>
</dbReference>
<dbReference type="Pfam" id="PF00699">
    <property type="entry name" value="Urease_beta"/>
    <property type="match status" value="1"/>
</dbReference>
<dbReference type="SUPFAM" id="SSF51278">
    <property type="entry name" value="Urease, beta-subunit"/>
    <property type="match status" value="1"/>
</dbReference>
<organism>
    <name type="scientific">Acinetobacter baumannii (strain AYE)</name>
    <dbReference type="NCBI Taxonomy" id="509173"/>
    <lineage>
        <taxon>Bacteria</taxon>
        <taxon>Pseudomonadati</taxon>
        <taxon>Pseudomonadota</taxon>
        <taxon>Gammaproteobacteria</taxon>
        <taxon>Moraxellales</taxon>
        <taxon>Moraxellaceae</taxon>
        <taxon>Acinetobacter</taxon>
        <taxon>Acinetobacter calcoaceticus/baumannii complex</taxon>
    </lineage>
</organism>